<organism>
    <name type="scientific">Xylella fastidiosa (strain M23)</name>
    <dbReference type="NCBI Taxonomy" id="405441"/>
    <lineage>
        <taxon>Bacteria</taxon>
        <taxon>Pseudomonadati</taxon>
        <taxon>Pseudomonadota</taxon>
        <taxon>Gammaproteobacteria</taxon>
        <taxon>Lysobacterales</taxon>
        <taxon>Lysobacteraceae</taxon>
        <taxon>Xylella</taxon>
    </lineage>
</organism>
<reference key="1">
    <citation type="journal article" date="2010" name="J. Bacteriol.">
        <title>Whole genome sequences of two Xylella fastidiosa strains (M12 and M23) causing almond leaf scorch disease in California.</title>
        <authorList>
            <person name="Chen J."/>
            <person name="Xie G."/>
            <person name="Han S."/>
            <person name="Chertkov O."/>
            <person name="Sims D."/>
            <person name="Civerolo E.L."/>
        </authorList>
    </citation>
    <scope>NUCLEOTIDE SEQUENCE [LARGE SCALE GENOMIC DNA]</scope>
    <source>
        <strain>M23</strain>
    </source>
</reference>
<dbReference type="EC" id="2.7.7.3" evidence="1"/>
<dbReference type="EMBL" id="CP001011">
    <property type="protein sequence ID" value="ACB91719.1"/>
    <property type="molecule type" value="Genomic_DNA"/>
</dbReference>
<dbReference type="RefSeq" id="WP_004087910.1">
    <property type="nucleotide sequence ID" value="NC_010577.1"/>
</dbReference>
<dbReference type="SMR" id="B2I7J1"/>
<dbReference type="GeneID" id="93903976"/>
<dbReference type="KEGG" id="xfn:XfasM23_0268"/>
<dbReference type="HOGENOM" id="CLU_100149_0_1_6"/>
<dbReference type="UniPathway" id="UPA00241">
    <property type="reaction ID" value="UER00355"/>
</dbReference>
<dbReference type="Proteomes" id="UP000001698">
    <property type="component" value="Chromosome"/>
</dbReference>
<dbReference type="GO" id="GO:0005737">
    <property type="term" value="C:cytoplasm"/>
    <property type="evidence" value="ECO:0007669"/>
    <property type="project" value="UniProtKB-SubCell"/>
</dbReference>
<dbReference type="GO" id="GO:0005524">
    <property type="term" value="F:ATP binding"/>
    <property type="evidence" value="ECO:0007669"/>
    <property type="project" value="UniProtKB-KW"/>
</dbReference>
<dbReference type="GO" id="GO:0004595">
    <property type="term" value="F:pantetheine-phosphate adenylyltransferase activity"/>
    <property type="evidence" value="ECO:0007669"/>
    <property type="project" value="UniProtKB-UniRule"/>
</dbReference>
<dbReference type="GO" id="GO:0015937">
    <property type="term" value="P:coenzyme A biosynthetic process"/>
    <property type="evidence" value="ECO:0007669"/>
    <property type="project" value="UniProtKB-UniRule"/>
</dbReference>
<dbReference type="CDD" id="cd02163">
    <property type="entry name" value="PPAT"/>
    <property type="match status" value="1"/>
</dbReference>
<dbReference type="Gene3D" id="3.40.50.620">
    <property type="entry name" value="HUPs"/>
    <property type="match status" value="1"/>
</dbReference>
<dbReference type="HAMAP" id="MF_00151">
    <property type="entry name" value="PPAT_bact"/>
    <property type="match status" value="1"/>
</dbReference>
<dbReference type="InterPro" id="IPR004821">
    <property type="entry name" value="Cyt_trans-like"/>
</dbReference>
<dbReference type="InterPro" id="IPR001980">
    <property type="entry name" value="PPAT"/>
</dbReference>
<dbReference type="InterPro" id="IPR014729">
    <property type="entry name" value="Rossmann-like_a/b/a_fold"/>
</dbReference>
<dbReference type="NCBIfam" id="TIGR01510">
    <property type="entry name" value="coaD_prev_kdtB"/>
    <property type="match status" value="1"/>
</dbReference>
<dbReference type="NCBIfam" id="TIGR00125">
    <property type="entry name" value="cyt_tran_rel"/>
    <property type="match status" value="1"/>
</dbReference>
<dbReference type="PANTHER" id="PTHR21342">
    <property type="entry name" value="PHOSPHOPANTETHEINE ADENYLYLTRANSFERASE"/>
    <property type="match status" value="1"/>
</dbReference>
<dbReference type="PANTHER" id="PTHR21342:SF1">
    <property type="entry name" value="PHOSPHOPANTETHEINE ADENYLYLTRANSFERASE"/>
    <property type="match status" value="1"/>
</dbReference>
<dbReference type="Pfam" id="PF01467">
    <property type="entry name" value="CTP_transf_like"/>
    <property type="match status" value="1"/>
</dbReference>
<dbReference type="PRINTS" id="PR01020">
    <property type="entry name" value="LPSBIOSNTHSS"/>
</dbReference>
<dbReference type="SUPFAM" id="SSF52374">
    <property type="entry name" value="Nucleotidylyl transferase"/>
    <property type="match status" value="1"/>
</dbReference>
<evidence type="ECO:0000255" key="1">
    <source>
        <dbReference type="HAMAP-Rule" id="MF_00151"/>
    </source>
</evidence>
<comment type="function">
    <text evidence="1">Reversibly transfers an adenylyl group from ATP to 4'-phosphopantetheine, yielding dephospho-CoA (dPCoA) and pyrophosphate.</text>
</comment>
<comment type="catalytic activity">
    <reaction evidence="1">
        <text>(R)-4'-phosphopantetheine + ATP + H(+) = 3'-dephospho-CoA + diphosphate</text>
        <dbReference type="Rhea" id="RHEA:19801"/>
        <dbReference type="ChEBI" id="CHEBI:15378"/>
        <dbReference type="ChEBI" id="CHEBI:30616"/>
        <dbReference type="ChEBI" id="CHEBI:33019"/>
        <dbReference type="ChEBI" id="CHEBI:57328"/>
        <dbReference type="ChEBI" id="CHEBI:61723"/>
        <dbReference type="EC" id="2.7.7.3"/>
    </reaction>
</comment>
<comment type="cofactor">
    <cofactor evidence="1">
        <name>Mg(2+)</name>
        <dbReference type="ChEBI" id="CHEBI:18420"/>
    </cofactor>
</comment>
<comment type="pathway">
    <text evidence="1">Cofactor biosynthesis; coenzyme A biosynthesis; CoA from (R)-pantothenate: step 4/5.</text>
</comment>
<comment type="subunit">
    <text evidence="1">Homohexamer.</text>
</comment>
<comment type="subcellular location">
    <subcellularLocation>
        <location evidence="1">Cytoplasm</location>
    </subcellularLocation>
</comment>
<comment type="similarity">
    <text evidence="1">Belongs to the bacterial CoaD family.</text>
</comment>
<name>COAD_XYLF2</name>
<sequence>MSVVNRRIAVYPGTFDPITNGHIDLVSRAAPLFESVVVGVAQSPSKGPSLPLQQRVTLAREALCQHENVQVIGFDTLLAHFVRHVGAGVLLRGLRAVSDFEYEFQMASMNRHLIPEVETLFLTPAEQHSFISSSLVREIARLGGDVSGFAPAAVVAALRQNL</sequence>
<proteinExistence type="inferred from homology"/>
<feature type="chain" id="PRO_1000096860" description="Phosphopantetheine adenylyltransferase">
    <location>
        <begin position="1"/>
        <end position="162"/>
    </location>
</feature>
<feature type="binding site" evidence="1">
    <location>
        <begin position="14"/>
        <end position="15"/>
    </location>
    <ligand>
        <name>ATP</name>
        <dbReference type="ChEBI" id="CHEBI:30616"/>
    </ligand>
</feature>
<feature type="binding site" evidence="1">
    <location>
        <position position="14"/>
    </location>
    <ligand>
        <name>substrate</name>
    </ligand>
</feature>
<feature type="binding site" evidence="1">
    <location>
        <position position="22"/>
    </location>
    <ligand>
        <name>ATP</name>
        <dbReference type="ChEBI" id="CHEBI:30616"/>
    </ligand>
</feature>
<feature type="binding site" evidence="1">
    <location>
        <position position="46"/>
    </location>
    <ligand>
        <name>substrate</name>
    </ligand>
</feature>
<feature type="binding site" evidence="1">
    <location>
        <position position="78"/>
    </location>
    <ligand>
        <name>substrate</name>
    </ligand>
</feature>
<feature type="binding site" evidence="1">
    <location>
        <position position="92"/>
    </location>
    <ligand>
        <name>substrate</name>
    </ligand>
</feature>
<feature type="binding site" evidence="1">
    <location>
        <begin position="93"/>
        <end position="95"/>
    </location>
    <ligand>
        <name>ATP</name>
        <dbReference type="ChEBI" id="CHEBI:30616"/>
    </ligand>
</feature>
<feature type="binding site" evidence="1">
    <location>
        <position position="103"/>
    </location>
    <ligand>
        <name>ATP</name>
        <dbReference type="ChEBI" id="CHEBI:30616"/>
    </ligand>
</feature>
<feature type="binding site" evidence="1">
    <location>
        <begin position="128"/>
        <end position="134"/>
    </location>
    <ligand>
        <name>ATP</name>
        <dbReference type="ChEBI" id="CHEBI:30616"/>
    </ligand>
</feature>
<feature type="site" description="Transition state stabilizer" evidence="1">
    <location>
        <position position="22"/>
    </location>
</feature>
<accession>B2I7J1</accession>
<gene>
    <name evidence="1" type="primary">coaD</name>
    <name type="ordered locus">XfasM23_0268</name>
</gene>
<protein>
    <recommendedName>
        <fullName evidence="1">Phosphopantetheine adenylyltransferase</fullName>
        <ecNumber evidence="1">2.7.7.3</ecNumber>
    </recommendedName>
    <alternativeName>
        <fullName evidence="1">Dephospho-CoA pyrophosphorylase</fullName>
    </alternativeName>
    <alternativeName>
        <fullName evidence="1">Pantetheine-phosphate adenylyltransferase</fullName>
        <shortName evidence="1">PPAT</shortName>
    </alternativeName>
</protein>
<keyword id="KW-0067">ATP-binding</keyword>
<keyword id="KW-0173">Coenzyme A biosynthesis</keyword>
<keyword id="KW-0963">Cytoplasm</keyword>
<keyword id="KW-0460">Magnesium</keyword>
<keyword id="KW-0547">Nucleotide-binding</keyword>
<keyword id="KW-0548">Nucleotidyltransferase</keyword>
<keyword id="KW-0808">Transferase</keyword>